<feature type="chain" id="PRO_0000084876" description="Probable transporter MCH1">
    <location>
        <begin position="1"/>
        <end position="486"/>
    </location>
</feature>
<feature type="transmembrane region" description="Helical" evidence="2">
    <location>
        <begin position="31"/>
        <end position="51"/>
    </location>
</feature>
<feature type="transmembrane region" description="Helical" evidence="2">
    <location>
        <begin position="68"/>
        <end position="88"/>
    </location>
</feature>
<feature type="transmembrane region" description="Helical" evidence="2">
    <location>
        <begin position="95"/>
        <end position="115"/>
    </location>
</feature>
<feature type="transmembrane region" description="Helical" evidence="2">
    <location>
        <begin position="135"/>
        <end position="155"/>
    </location>
</feature>
<feature type="transmembrane region" description="Helical" evidence="2">
    <location>
        <begin position="174"/>
        <end position="194"/>
    </location>
</feature>
<feature type="transmembrane region" description="Helical" evidence="2">
    <location>
        <begin position="211"/>
        <end position="231"/>
    </location>
</feature>
<feature type="transmembrane region" description="Helical" evidence="2">
    <location>
        <begin position="268"/>
        <end position="288"/>
    </location>
</feature>
<feature type="transmembrane region" description="Helical" evidence="2">
    <location>
        <begin position="312"/>
        <end position="333"/>
    </location>
</feature>
<feature type="transmembrane region" description="Helical" evidence="2">
    <location>
        <begin position="349"/>
        <end position="369"/>
    </location>
</feature>
<feature type="transmembrane region" description="Helical" evidence="2">
    <location>
        <begin position="377"/>
        <end position="397"/>
    </location>
</feature>
<feature type="transmembrane region" description="Helical" evidence="2">
    <location>
        <begin position="409"/>
        <end position="429"/>
    </location>
</feature>
<feature type="transmembrane region" description="Helical" evidence="2">
    <location>
        <begin position="457"/>
        <end position="477"/>
    </location>
</feature>
<organism>
    <name type="scientific">Yarrowia lipolytica (strain CLIB 122 / E 150)</name>
    <name type="common">Yeast</name>
    <name type="synonym">Candida lipolytica</name>
    <dbReference type="NCBI Taxonomy" id="284591"/>
    <lineage>
        <taxon>Eukaryota</taxon>
        <taxon>Fungi</taxon>
        <taxon>Dikarya</taxon>
        <taxon>Ascomycota</taxon>
        <taxon>Saccharomycotina</taxon>
        <taxon>Dipodascomycetes</taxon>
        <taxon>Dipodascales</taxon>
        <taxon>Dipodascales incertae sedis</taxon>
        <taxon>Yarrowia</taxon>
    </lineage>
</organism>
<accession>Q6CGU8</accession>
<gene>
    <name type="primary">MCH1</name>
    <name type="ordered locus">YALI0A16060g</name>
</gene>
<name>MCH1_YARLI</name>
<protein>
    <recommendedName>
        <fullName>Probable transporter MCH1</fullName>
    </recommendedName>
</protein>
<sequence length="486" mass="52293">MVDERTPLKAVTTREDAPTAVMRPKPVGKSIFALSILGTLSAASISLFSMYGQTLQHKLGFTQVQVNSVSISSLLGMYLLMPVIGYLGDTYGSNYLALFSWITFPASYSIASGIFSTAADWHRETGEALPRAAPEMALCFFFIGASTSCMYYASLKASAHSMSVYFAEDGKLQTYTPGYAIWGPVAAFGLSSLWQSQLLRAVFITGKNVNVAGIFLFFAGLYAVICGIIFFSCRTAESMASELRKKAEASTDCNCDGPGHEGATLKEFFTDKTAWLFLLCFVFIGGPFEMFQNNMGAILDTVTVENADSPSFSTHVSLFATFSTVSRLVVGFSSEAMESHVSRPVLLSVIALVAACIHLMVPSGIFTVFDNAKYFSVVTIVNGFSYGSSFTLVPTIVTKVWGIANLGTIWGSFILALAVGSLGYGLLFAKVYDAASEVGVGSMSQVCSGVHCYGLTFVITGTGLAFAAAAVFFIWVFMWKKRGIHM</sequence>
<keyword id="KW-0472">Membrane</keyword>
<keyword id="KW-1185">Reference proteome</keyword>
<keyword id="KW-0812">Transmembrane</keyword>
<keyword id="KW-1133">Transmembrane helix</keyword>
<keyword id="KW-0813">Transport</keyword>
<keyword id="KW-0926">Vacuole</keyword>
<proteinExistence type="inferred from homology"/>
<dbReference type="EMBL" id="CR382127">
    <property type="protein sequence ID" value="CAG84045.1"/>
    <property type="molecule type" value="Genomic_DNA"/>
</dbReference>
<dbReference type="RefSeq" id="XP_500114.1">
    <property type="nucleotide sequence ID" value="XM_500114.1"/>
</dbReference>
<dbReference type="SMR" id="Q6CGU8"/>
<dbReference type="FunCoup" id="Q6CGU8">
    <property type="interactions" value="17"/>
</dbReference>
<dbReference type="EnsemblFungi" id="CAG84045">
    <property type="protein sequence ID" value="CAG84045"/>
    <property type="gene ID" value="YALI0_A16060g"/>
</dbReference>
<dbReference type="KEGG" id="yli:2906009"/>
<dbReference type="VEuPathDB" id="FungiDB:YALI0_A16060g"/>
<dbReference type="HOGENOM" id="CLU_012596_2_0_1"/>
<dbReference type="InParanoid" id="Q6CGU8"/>
<dbReference type="OMA" id="PTMWWLA"/>
<dbReference type="OrthoDB" id="125530at4891"/>
<dbReference type="Proteomes" id="UP000001300">
    <property type="component" value="Chromosome A"/>
</dbReference>
<dbReference type="GO" id="GO:0000329">
    <property type="term" value="C:fungal-type vacuole membrane"/>
    <property type="evidence" value="ECO:0000318"/>
    <property type="project" value="GO_Central"/>
</dbReference>
<dbReference type="GO" id="GO:0022857">
    <property type="term" value="F:transmembrane transporter activity"/>
    <property type="evidence" value="ECO:0007669"/>
    <property type="project" value="InterPro"/>
</dbReference>
<dbReference type="CDD" id="cd17354">
    <property type="entry name" value="MFS_Mch1p_like"/>
    <property type="match status" value="1"/>
</dbReference>
<dbReference type="Gene3D" id="1.20.1250.20">
    <property type="entry name" value="MFS general substrate transporter like domains"/>
    <property type="match status" value="1"/>
</dbReference>
<dbReference type="InterPro" id="IPR011701">
    <property type="entry name" value="MFS"/>
</dbReference>
<dbReference type="InterPro" id="IPR036259">
    <property type="entry name" value="MFS_trans_sf"/>
</dbReference>
<dbReference type="PANTHER" id="PTHR21576:SF45">
    <property type="entry name" value="TRANSPORTER MCH1-RELATED"/>
    <property type="match status" value="1"/>
</dbReference>
<dbReference type="PANTHER" id="PTHR21576">
    <property type="entry name" value="UNCHARACTERIZED NODULIN-LIKE PROTEIN"/>
    <property type="match status" value="1"/>
</dbReference>
<dbReference type="Pfam" id="PF07690">
    <property type="entry name" value="MFS_1"/>
    <property type="match status" value="1"/>
</dbReference>
<dbReference type="SUPFAM" id="SSF103473">
    <property type="entry name" value="MFS general substrate transporter"/>
    <property type="match status" value="1"/>
</dbReference>
<evidence type="ECO:0000250" key="1"/>
<evidence type="ECO:0000255" key="2"/>
<evidence type="ECO:0000305" key="3"/>
<comment type="function">
    <text evidence="1">Probable transporter.</text>
</comment>
<comment type="subcellular location">
    <subcellularLocation>
        <location evidence="1">Vacuole membrane</location>
        <topology evidence="1">Multi-pass membrane protein</topology>
    </subcellularLocation>
</comment>
<comment type="similarity">
    <text evidence="3">Belongs to the major facilitator superfamily.</text>
</comment>
<reference key="1">
    <citation type="journal article" date="2004" name="Nature">
        <title>Genome evolution in yeasts.</title>
        <authorList>
            <person name="Dujon B."/>
            <person name="Sherman D."/>
            <person name="Fischer G."/>
            <person name="Durrens P."/>
            <person name="Casaregola S."/>
            <person name="Lafontaine I."/>
            <person name="de Montigny J."/>
            <person name="Marck C."/>
            <person name="Neuveglise C."/>
            <person name="Talla E."/>
            <person name="Goffard N."/>
            <person name="Frangeul L."/>
            <person name="Aigle M."/>
            <person name="Anthouard V."/>
            <person name="Babour A."/>
            <person name="Barbe V."/>
            <person name="Barnay S."/>
            <person name="Blanchin S."/>
            <person name="Beckerich J.-M."/>
            <person name="Beyne E."/>
            <person name="Bleykasten C."/>
            <person name="Boisrame A."/>
            <person name="Boyer J."/>
            <person name="Cattolico L."/>
            <person name="Confanioleri F."/>
            <person name="de Daruvar A."/>
            <person name="Despons L."/>
            <person name="Fabre E."/>
            <person name="Fairhead C."/>
            <person name="Ferry-Dumazet H."/>
            <person name="Groppi A."/>
            <person name="Hantraye F."/>
            <person name="Hennequin C."/>
            <person name="Jauniaux N."/>
            <person name="Joyet P."/>
            <person name="Kachouri R."/>
            <person name="Kerrest A."/>
            <person name="Koszul R."/>
            <person name="Lemaire M."/>
            <person name="Lesur I."/>
            <person name="Ma L."/>
            <person name="Muller H."/>
            <person name="Nicaud J.-M."/>
            <person name="Nikolski M."/>
            <person name="Oztas S."/>
            <person name="Ozier-Kalogeropoulos O."/>
            <person name="Pellenz S."/>
            <person name="Potier S."/>
            <person name="Richard G.-F."/>
            <person name="Straub M.-L."/>
            <person name="Suleau A."/>
            <person name="Swennen D."/>
            <person name="Tekaia F."/>
            <person name="Wesolowski-Louvel M."/>
            <person name="Westhof E."/>
            <person name="Wirth B."/>
            <person name="Zeniou-Meyer M."/>
            <person name="Zivanovic Y."/>
            <person name="Bolotin-Fukuhara M."/>
            <person name="Thierry A."/>
            <person name="Bouchier C."/>
            <person name="Caudron B."/>
            <person name="Scarpelli C."/>
            <person name="Gaillardin C."/>
            <person name="Weissenbach J."/>
            <person name="Wincker P."/>
            <person name="Souciet J.-L."/>
        </authorList>
    </citation>
    <scope>NUCLEOTIDE SEQUENCE [LARGE SCALE GENOMIC DNA]</scope>
    <source>
        <strain>CLIB 122 / E 150</strain>
    </source>
</reference>